<organism>
    <name type="scientific">Pseudomonas syringae pv. syringae (strain B728a)</name>
    <dbReference type="NCBI Taxonomy" id="205918"/>
    <lineage>
        <taxon>Bacteria</taxon>
        <taxon>Pseudomonadati</taxon>
        <taxon>Pseudomonadota</taxon>
        <taxon>Gammaproteobacteria</taxon>
        <taxon>Pseudomonadales</taxon>
        <taxon>Pseudomonadaceae</taxon>
        <taxon>Pseudomonas</taxon>
        <taxon>Pseudomonas syringae</taxon>
    </lineage>
</organism>
<reference key="1">
    <citation type="journal article" date="2005" name="Proc. Natl. Acad. Sci. U.S.A.">
        <title>Comparison of the complete genome sequences of Pseudomonas syringae pv. syringae B728a and pv. tomato DC3000.</title>
        <authorList>
            <person name="Feil H."/>
            <person name="Feil W.S."/>
            <person name="Chain P."/>
            <person name="Larimer F."/>
            <person name="Dibartolo G."/>
            <person name="Copeland A."/>
            <person name="Lykidis A."/>
            <person name="Trong S."/>
            <person name="Nolan M."/>
            <person name="Goltsman E."/>
            <person name="Thiel J."/>
            <person name="Malfatti S."/>
            <person name="Loper J.E."/>
            <person name="Lapidus A."/>
            <person name="Detter J.C."/>
            <person name="Land M."/>
            <person name="Richardson P.M."/>
            <person name="Kyrpides N.C."/>
            <person name="Ivanova N."/>
            <person name="Lindow S.E."/>
        </authorList>
    </citation>
    <scope>NUCLEOTIDE SEQUENCE [LARGE SCALE GENOMIC DNA]</scope>
    <source>
        <strain>B728a</strain>
    </source>
</reference>
<accession>Q4ZXX3</accession>
<protein>
    <recommendedName>
        <fullName evidence="1">Large ribosomal subunit protein bL25</fullName>
    </recommendedName>
    <alternativeName>
        <fullName evidence="2">50S ribosomal protein L25</fullName>
    </alternativeName>
    <alternativeName>
        <fullName evidence="1">General stress protein CTC</fullName>
    </alternativeName>
</protein>
<sequence>MNEFTLNAEQRSDLGKGASRRLRRLASLVPAVVYGGDKAPESISMLAKEVAKLLENDAAYSHIIELNVGGKKQNVIIKALQRHPAKGHVMHADFVRVIAGQKLTAIVPIHFLNEEAPVKKGGEISHTTTELEVTCLPKDLPEFIEVDLGSLEVGDNVHLSELKAPKGVEFVALAHGTDLAIANVHAPRIVKDEEEGEAEEGAAE</sequence>
<gene>
    <name evidence="1" type="primary">rplY</name>
    <name evidence="1" type="synonym">ctc</name>
    <name type="ordered locus">Psyr_0943</name>
</gene>
<name>RL25_PSEU2</name>
<proteinExistence type="inferred from homology"/>
<feature type="chain" id="PRO_0000244229" description="Large ribosomal subunit protein bL25">
    <location>
        <begin position="1"/>
        <end position="204"/>
    </location>
</feature>
<dbReference type="EMBL" id="CP000075">
    <property type="protein sequence ID" value="AAY35999.1"/>
    <property type="molecule type" value="Genomic_DNA"/>
</dbReference>
<dbReference type="RefSeq" id="WP_011266730.1">
    <property type="nucleotide sequence ID" value="NC_007005.1"/>
</dbReference>
<dbReference type="RefSeq" id="YP_234037.1">
    <property type="nucleotide sequence ID" value="NC_007005.1"/>
</dbReference>
<dbReference type="SMR" id="Q4ZXX3"/>
<dbReference type="STRING" id="205918.Psyr_0943"/>
<dbReference type="KEGG" id="psb:Psyr_0943"/>
<dbReference type="PATRIC" id="fig|205918.7.peg.972"/>
<dbReference type="eggNOG" id="COG1825">
    <property type="taxonomic scope" value="Bacteria"/>
</dbReference>
<dbReference type="HOGENOM" id="CLU_075939_0_1_6"/>
<dbReference type="OrthoDB" id="9806411at2"/>
<dbReference type="Proteomes" id="UP000000426">
    <property type="component" value="Chromosome"/>
</dbReference>
<dbReference type="GO" id="GO:0022625">
    <property type="term" value="C:cytosolic large ribosomal subunit"/>
    <property type="evidence" value="ECO:0007669"/>
    <property type="project" value="TreeGrafter"/>
</dbReference>
<dbReference type="GO" id="GO:0008097">
    <property type="term" value="F:5S rRNA binding"/>
    <property type="evidence" value="ECO:0007669"/>
    <property type="project" value="InterPro"/>
</dbReference>
<dbReference type="GO" id="GO:0003735">
    <property type="term" value="F:structural constituent of ribosome"/>
    <property type="evidence" value="ECO:0007669"/>
    <property type="project" value="InterPro"/>
</dbReference>
<dbReference type="GO" id="GO:0006412">
    <property type="term" value="P:translation"/>
    <property type="evidence" value="ECO:0007669"/>
    <property type="project" value="UniProtKB-UniRule"/>
</dbReference>
<dbReference type="CDD" id="cd00495">
    <property type="entry name" value="Ribosomal_L25_TL5_CTC"/>
    <property type="match status" value="1"/>
</dbReference>
<dbReference type="Gene3D" id="2.170.120.20">
    <property type="entry name" value="Ribosomal protein L25, beta domain"/>
    <property type="match status" value="1"/>
</dbReference>
<dbReference type="Gene3D" id="2.40.240.10">
    <property type="entry name" value="Ribosomal Protein L25, Chain P"/>
    <property type="match status" value="1"/>
</dbReference>
<dbReference type="HAMAP" id="MF_01334">
    <property type="entry name" value="Ribosomal_bL25_CTC"/>
    <property type="match status" value="1"/>
</dbReference>
<dbReference type="InterPro" id="IPR020056">
    <property type="entry name" value="Rbsml_bL25/Gln-tRNA_synth_N"/>
</dbReference>
<dbReference type="InterPro" id="IPR011035">
    <property type="entry name" value="Ribosomal_bL25/Gln-tRNA_synth"/>
</dbReference>
<dbReference type="InterPro" id="IPR020057">
    <property type="entry name" value="Ribosomal_bL25_b-dom"/>
</dbReference>
<dbReference type="InterPro" id="IPR037121">
    <property type="entry name" value="Ribosomal_bL25_C"/>
</dbReference>
<dbReference type="InterPro" id="IPR001021">
    <property type="entry name" value="Ribosomal_bL25_long"/>
</dbReference>
<dbReference type="InterPro" id="IPR029751">
    <property type="entry name" value="Ribosomal_L25_dom"/>
</dbReference>
<dbReference type="InterPro" id="IPR020930">
    <property type="entry name" value="Ribosomal_uL5_bac-type"/>
</dbReference>
<dbReference type="NCBIfam" id="TIGR00731">
    <property type="entry name" value="bL25_bact_ctc"/>
    <property type="match status" value="1"/>
</dbReference>
<dbReference type="NCBIfam" id="NF004128">
    <property type="entry name" value="PRK05618.1-2"/>
    <property type="match status" value="1"/>
</dbReference>
<dbReference type="NCBIfam" id="NF004130">
    <property type="entry name" value="PRK05618.1-5"/>
    <property type="match status" value="1"/>
</dbReference>
<dbReference type="NCBIfam" id="NF004612">
    <property type="entry name" value="PRK05943.1"/>
    <property type="match status" value="1"/>
</dbReference>
<dbReference type="PANTHER" id="PTHR33284">
    <property type="entry name" value="RIBOSOMAL PROTEIN L25/GLN-TRNA SYNTHETASE, ANTI-CODON-BINDING DOMAIN-CONTAINING PROTEIN"/>
    <property type="match status" value="1"/>
</dbReference>
<dbReference type="PANTHER" id="PTHR33284:SF1">
    <property type="entry name" value="RIBOSOMAL PROTEIN L25_GLN-TRNA SYNTHETASE, ANTI-CODON-BINDING DOMAIN-CONTAINING PROTEIN"/>
    <property type="match status" value="1"/>
</dbReference>
<dbReference type="Pfam" id="PF01386">
    <property type="entry name" value="Ribosomal_L25p"/>
    <property type="match status" value="1"/>
</dbReference>
<dbReference type="Pfam" id="PF14693">
    <property type="entry name" value="Ribosomal_TL5_C"/>
    <property type="match status" value="1"/>
</dbReference>
<dbReference type="SUPFAM" id="SSF50715">
    <property type="entry name" value="Ribosomal protein L25-like"/>
    <property type="match status" value="1"/>
</dbReference>
<comment type="function">
    <text evidence="1">This is one of the proteins that binds to the 5S RNA in the ribosome where it forms part of the central protuberance.</text>
</comment>
<comment type="subunit">
    <text evidence="1">Part of the 50S ribosomal subunit; part of the 5S rRNA/L5/L18/L25 subcomplex. Contacts the 5S rRNA. Binds to the 5S rRNA independently of L5 and L18.</text>
</comment>
<comment type="similarity">
    <text evidence="1">Belongs to the bacterial ribosomal protein bL25 family. CTC subfamily.</text>
</comment>
<evidence type="ECO:0000255" key="1">
    <source>
        <dbReference type="HAMAP-Rule" id="MF_01334"/>
    </source>
</evidence>
<evidence type="ECO:0000305" key="2"/>
<keyword id="KW-0687">Ribonucleoprotein</keyword>
<keyword id="KW-0689">Ribosomal protein</keyword>
<keyword id="KW-0694">RNA-binding</keyword>
<keyword id="KW-0699">rRNA-binding</keyword>